<sequence>MKQTFQPSNRKRKNKHGFRSRMKTINGRRILASRRAKGRKKLTVSDEYNG</sequence>
<reference key="1">
    <citation type="journal article" date="2008" name="Science">
        <title>Genome of an endosymbiont coupling N2 fixation to cellulolysis within RT protist cells in termite gut.</title>
        <authorList>
            <person name="Hongoh Y."/>
            <person name="Sharma V.K."/>
            <person name="Prakash T."/>
            <person name="Noda S."/>
            <person name="Toh H."/>
            <person name="Taylor T.D."/>
            <person name="Kudo T."/>
            <person name="Sakaki Y."/>
            <person name="Toyoda A."/>
            <person name="Hattori M."/>
            <person name="Ohkuma M."/>
        </authorList>
    </citation>
    <scope>NUCLEOTIDE SEQUENCE [LARGE SCALE GENOMIC DNA]</scope>
</reference>
<proteinExistence type="inferred from homology"/>
<gene>
    <name evidence="1" type="primary">rpmH</name>
    <name type="ordered locus">CFPG_113</name>
</gene>
<keyword id="KW-1185">Reference proteome</keyword>
<keyword id="KW-0687">Ribonucleoprotein</keyword>
<keyword id="KW-0689">Ribosomal protein</keyword>
<name>RL34_AZOPC</name>
<protein>
    <recommendedName>
        <fullName evidence="1">Large ribosomal subunit protein bL34</fullName>
    </recommendedName>
    <alternativeName>
        <fullName evidence="3">50S ribosomal protein L34</fullName>
    </alternativeName>
</protein>
<accession>B6YQA4</accession>
<organism>
    <name type="scientific">Azobacteroides pseudotrichonymphae genomovar. CFP2</name>
    <dbReference type="NCBI Taxonomy" id="511995"/>
    <lineage>
        <taxon>Bacteria</taxon>
        <taxon>Pseudomonadati</taxon>
        <taxon>Bacteroidota</taxon>
        <taxon>Bacteroidia</taxon>
        <taxon>Bacteroidales</taxon>
        <taxon>Candidatus Azobacteroides</taxon>
    </lineage>
</organism>
<evidence type="ECO:0000255" key="1">
    <source>
        <dbReference type="HAMAP-Rule" id="MF_00391"/>
    </source>
</evidence>
<evidence type="ECO:0000256" key="2">
    <source>
        <dbReference type="SAM" id="MobiDB-lite"/>
    </source>
</evidence>
<evidence type="ECO:0000305" key="3"/>
<feature type="chain" id="PRO_1000122891" description="Large ribosomal subunit protein bL34">
    <location>
        <begin position="1"/>
        <end position="50"/>
    </location>
</feature>
<feature type="region of interest" description="Disordered" evidence="2">
    <location>
        <begin position="1"/>
        <end position="23"/>
    </location>
</feature>
<feature type="compositionally biased region" description="Basic residues" evidence="2">
    <location>
        <begin position="9"/>
        <end position="22"/>
    </location>
</feature>
<dbReference type="EMBL" id="AP010656">
    <property type="protein sequence ID" value="BAG83376.1"/>
    <property type="molecule type" value="Genomic_DNA"/>
</dbReference>
<dbReference type="RefSeq" id="WP_012573137.1">
    <property type="nucleotide sequence ID" value="NC_011565.1"/>
</dbReference>
<dbReference type="SMR" id="B6YQA4"/>
<dbReference type="STRING" id="511995.CFPG_113"/>
<dbReference type="KEGG" id="aps:CFPG_113"/>
<dbReference type="eggNOG" id="COG0230">
    <property type="taxonomic scope" value="Bacteria"/>
</dbReference>
<dbReference type="HOGENOM" id="CLU_129938_2_0_10"/>
<dbReference type="OrthoDB" id="9804164at2"/>
<dbReference type="Proteomes" id="UP000000723">
    <property type="component" value="Chromosome"/>
</dbReference>
<dbReference type="GO" id="GO:1990904">
    <property type="term" value="C:ribonucleoprotein complex"/>
    <property type="evidence" value="ECO:0007669"/>
    <property type="project" value="UniProtKB-KW"/>
</dbReference>
<dbReference type="GO" id="GO:0005840">
    <property type="term" value="C:ribosome"/>
    <property type="evidence" value="ECO:0007669"/>
    <property type="project" value="UniProtKB-KW"/>
</dbReference>
<dbReference type="GO" id="GO:0003735">
    <property type="term" value="F:structural constituent of ribosome"/>
    <property type="evidence" value="ECO:0007669"/>
    <property type="project" value="InterPro"/>
</dbReference>
<dbReference type="GO" id="GO:0006412">
    <property type="term" value="P:translation"/>
    <property type="evidence" value="ECO:0007669"/>
    <property type="project" value="UniProtKB-UniRule"/>
</dbReference>
<dbReference type="FunFam" id="1.10.287.3980:FF:000001">
    <property type="entry name" value="Mitochondrial ribosomal protein L34"/>
    <property type="match status" value="1"/>
</dbReference>
<dbReference type="Gene3D" id="1.10.287.3980">
    <property type="match status" value="1"/>
</dbReference>
<dbReference type="HAMAP" id="MF_00391">
    <property type="entry name" value="Ribosomal_bL34"/>
    <property type="match status" value="1"/>
</dbReference>
<dbReference type="InterPro" id="IPR000271">
    <property type="entry name" value="Ribosomal_bL34"/>
</dbReference>
<dbReference type="NCBIfam" id="TIGR01030">
    <property type="entry name" value="rpmH_bact"/>
    <property type="match status" value="1"/>
</dbReference>
<dbReference type="PANTHER" id="PTHR14503:SF4">
    <property type="entry name" value="LARGE RIBOSOMAL SUBUNIT PROTEIN BL34M"/>
    <property type="match status" value="1"/>
</dbReference>
<dbReference type="PANTHER" id="PTHR14503">
    <property type="entry name" value="MITOCHONDRIAL RIBOSOMAL PROTEIN 34 FAMILY MEMBER"/>
    <property type="match status" value="1"/>
</dbReference>
<dbReference type="Pfam" id="PF00468">
    <property type="entry name" value="Ribosomal_L34"/>
    <property type="match status" value="1"/>
</dbReference>
<comment type="similarity">
    <text evidence="1">Belongs to the bacterial ribosomal protein bL34 family.</text>
</comment>